<gene>
    <name evidence="1" type="primary">rplB</name>
    <name type="ordered locus">Dtpsy_0276</name>
</gene>
<evidence type="ECO:0000255" key="1">
    <source>
        <dbReference type="HAMAP-Rule" id="MF_01320"/>
    </source>
</evidence>
<evidence type="ECO:0000256" key="2">
    <source>
        <dbReference type="SAM" id="MobiDB-lite"/>
    </source>
</evidence>
<evidence type="ECO:0000305" key="3"/>
<keyword id="KW-1185">Reference proteome</keyword>
<keyword id="KW-0687">Ribonucleoprotein</keyword>
<keyword id="KW-0689">Ribosomal protein</keyword>
<keyword id="KW-0694">RNA-binding</keyword>
<keyword id="KW-0699">rRNA-binding</keyword>
<name>RL2_ACIET</name>
<dbReference type="EMBL" id="CP001392">
    <property type="protein sequence ID" value="ACM31760.1"/>
    <property type="molecule type" value="Genomic_DNA"/>
</dbReference>
<dbReference type="RefSeq" id="WP_012655362.1">
    <property type="nucleotide sequence ID" value="NC_011992.1"/>
</dbReference>
<dbReference type="SMR" id="B9MB76"/>
<dbReference type="KEGG" id="dia:Dtpsy_0276"/>
<dbReference type="eggNOG" id="COG0090">
    <property type="taxonomic scope" value="Bacteria"/>
</dbReference>
<dbReference type="HOGENOM" id="CLU_036235_2_1_4"/>
<dbReference type="Proteomes" id="UP000000450">
    <property type="component" value="Chromosome"/>
</dbReference>
<dbReference type="GO" id="GO:0015934">
    <property type="term" value="C:large ribosomal subunit"/>
    <property type="evidence" value="ECO:0007669"/>
    <property type="project" value="InterPro"/>
</dbReference>
<dbReference type="GO" id="GO:0019843">
    <property type="term" value="F:rRNA binding"/>
    <property type="evidence" value="ECO:0007669"/>
    <property type="project" value="UniProtKB-UniRule"/>
</dbReference>
<dbReference type="GO" id="GO:0003735">
    <property type="term" value="F:structural constituent of ribosome"/>
    <property type="evidence" value="ECO:0007669"/>
    <property type="project" value="InterPro"/>
</dbReference>
<dbReference type="GO" id="GO:0016740">
    <property type="term" value="F:transferase activity"/>
    <property type="evidence" value="ECO:0007669"/>
    <property type="project" value="InterPro"/>
</dbReference>
<dbReference type="GO" id="GO:0002181">
    <property type="term" value="P:cytoplasmic translation"/>
    <property type="evidence" value="ECO:0007669"/>
    <property type="project" value="TreeGrafter"/>
</dbReference>
<dbReference type="FunFam" id="2.30.30.30:FF:000001">
    <property type="entry name" value="50S ribosomal protein L2"/>
    <property type="match status" value="1"/>
</dbReference>
<dbReference type="FunFam" id="2.40.50.140:FF:000003">
    <property type="entry name" value="50S ribosomal protein L2"/>
    <property type="match status" value="1"/>
</dbReference>
<dbReference type="FunFam" id="4.10.950.10:FF:000001">
    <property type="entry name" value="50S ribosomal protein L2"/>
    <property type="match status" value="1"/>
</dbReference>
<dbReference type="Gene3D" id="2.30.30.30">
    <property type="match status" value="1"/>
</dbReference>
<dbReference type="Gene3D" id="2.40.50.140">
    <property type="entry name" value="Nucleic acid-binding proteins"/>
    <property type="match status" value="1"/>
</dbReference>
<dbReference type="Gene3D" id="4.10.950.10">
    <property type="entry name" value="Ribosomal protein L2, domain 3"/>
    <property type="match status" value="1"/>
</dbReference>
<dbReference type="HAMAP" id="MF_01320_B">
    <property type="entry name" value="Ribosomal_uL2_B"/>
    <property type="match status" value="1"/>
</dbReference>
<dbReference type="InterPro" id="IPR012340">
    <property type="entry name" value="NA-bd_OB-fold"/>
</dbReference>
<dbReference type="InterPro" id="IPR014722">
    <property type="entry name" value="Rib_uL2_dom2"/>
</dbReference>
<dbReference type="InterPro" id="IPR002171">
    <property type="entry name" value="Ribosomal_uL2"/>
</dbReference>
<dbReference type="InterPro" id="IPR005880">
    <property type="entry name" value="Ribosomal_uL2_bac/org-type"/>
</dbReference>
<dbReference type="InterPro" id="IPR022669">
    <property type="entry name" value="Ribosomal_uL2_C"/>
</dbReference>
<dbReference type="InterPro" id="IPR022671">
    <property type="entry name" value="Ribosomal_uL2_CS"/>
</dbReference>
<dbReference type="InterPro" id="IPR014726">
    <property type="entry name" value="Ribosomal_uL2_dom3"/>
</dbReference>
<dbReference type="InterPro" id="IPR022666">
    <property type="entry name" value="Ribosomal_uL2_RNA-bd_dom"/>
</dbReference>
<dbReference type="InterPro" id="IPR008991">
    <property type="entry name" value="Translation_prot_SH3-like_sf"/>
</dbReference>
<dbReference type="NCBIfam" id="TIGR01171">
    <property type="entry name" value="rplB_bact"/>
    <property type="match status" value="1"/>
</dbReference>
<dbReference type="PANTHER" id="PTHR13691:SF5">
    <property type="entry name" value="LARGE RIBOSOMAL SUBUNIT PROTEIN UL2M"/>
    <property type="match status" value="1"/>
</dbReference>
<dbReference type="PANTHER" id="PTHR13691">
    <property type="entry name" value="RIBOSOMAL PROTEIN L2"/>
    <property type="match status" value="1"/>
</dbReference>
<dbReference type="Pfam" id="PF00181">
    <property type="entry name" value="Ribosomal_L2"/>
    <property type="match status" value="1"/>
</dbReference>
<dbReference type="Pfam" id="PF03947">
    <property type="entry name" value="Ribosomal_L2_C"/>
    <property type="match status" value="1"/>
</dbReference>
<dbReference type="PIRSF" id="PIRSF002158">
    <property type="entry name" value="Ribosomal_L2"/>
    <property type="match status" value="1"/>
</dbReference>
<dbReference type="SMART" id="SM01383">
    <property type="entry name" value="Ribosomal_L2"/>
    <property type="match status" value="1"/>
</dbReference>
<dbReference type="SMART" id="SM01382">
    <property type="entry name" value="Ribosomal_L2_C"/>
    <property type="match status" value="1"/>
</dbReference>
<dbReference type="SUPFAM" id="SSF50249">
    <property type="entry name" value="Nucleic acid-binding proteins"/>
    <property type="match status" value="1"/>
</dbReference>
<dbReference type="SUPFAM" id="SSF50104">
    <property type="entry name" value="Translation proteins SH3-like domain"/>
    <property type="match status" value="1"/>
</dbReference>
<dbReference type="PROSITE" id="PS00467">
    <property type="entry name" value="RIBOSOMAL_L2"/>
    <property type="match status" value="1"/>
</dbReference>
<comment type="function">
    <text evidence="1">One of the primary rRNA binding proteins. Required for association of the 30S and 50S subunits to form the 70S ribosome, for tRNA binding and peptide bond formation. It has been suggested to have peptidyltransferase activity; this is somewhat controversial. Makes several contacts with the 16S rRNA in the 70S ribosome.</text>
</comment>
<comment type="subunit">
    <text evidence="1">Part of the 50S ribosomal subunit. Forms a bridge to the 30S subunit in the 70S ribosome.</text>
</comment>
<comment type="similarity">
    <text evidence="1">Belongs to the universal ribosomal protein uL2 family.</text>
</comment>
<organism>
    <name type="scientific">Acidovorax ebreus (strain TPSY)</name>
    <name type="common">Diaphorobacter sp. (strain TPSY)</name>
    <dbReference type="NCBI Taxonomy" id="535289"/>
    <lineage>
        <taxon>Bacteria</taxon>
        <taxon>Pseudomonadati</taxon>
        <taxon>Pseudomonadota</taxon>
        <taxon>Betaproteobacteria</taxon>
        <taxon>Burkholderiales</taxon>
        <taxon>Comamonadaceae</taxon>
        <taxon>Diaphorobacter</taxon>
    </lineage>
</organism>
<feature type="chain" id="PRO_1000165746" description="Large ribosomal subunit protein uL2">
    <location>
        <begin position="1"/>
        <end position="274"/>
    </location>
</feature>
<feature type="region of interest" description="Disordered" evidence="2">
    <location>
        <begin position="224"/>
        <end position="256"/>
    </location>
</feature>
<feature type="compositionally biased region" description="Basic and acidic residues" evidence="2">
    <location>
        <begin position="229"/>
        <end position="246"/>
    </location>
</feature>
<sequence length="274" mass="30205">MAVIKIKPTSPGQRGTVKISRDHLYKGEAFAGLLEPQFQKAGRNNNGHITTRHKGGGHKHHYRVVDFRRNKDAIPAKVERIEYDPNRTAHIALVCYADGERRYIIAPRNLEVGATIVSGSEAPIRVGNTLPIRNIPVGSTIHCIELKPGAGAQIARSAGTSATLLAREGVYAQVRMRSGEVRKIHIECRATIGEVANEEHSLRQLGKAGVKRWMGIRPTVRGVAMNPIDHPHGGGEGRTGEGRHAVDPWGNLTKGYRTRNNKRTQVMIVSRRKK</sequence>
<reference key="1">
    <citation type="submission" date="2009-01" db="EMBL/GenBank/DDBJ databases">
        <title>Complete sequence of Diaphorobacter sp. TPSY.</title>
        <authorList>
            <consortium name="US DOE Joint Genome Institute"/>
            <person name="Lucas S."/>
            <person name="Copeland A."/>
            <person name="Lapidus A."/>
            <person name="Glavina del Rio T."/>
            <person name="Tice H."/>
            <person name="Bruce D."/>
            <person name="Goodwin L."/>
            <person name="Pitluck S."/>
            <person name="Chertkov O."/>
            <person name="Brettin T."/>
            <person name="Detter J.C."/>
            <person name="Han C."/>
            <person name="Larimer F."/>
            <person name="Land M."/>
            <person name="Hauser L."/>
            <person name="Kyrpides N."/>
            <person name="Mikhailova N."/>
            <person name="Coates J.D."/>
        </authorList>
    </citation>
    <scope>NUCLEOTIDE SEQUENCE [LARGE SCALE GENOMIC DNA]</scope>
    <source>
        <strain>TPSY</strain>
    </source>
</reference>
<proteinExistence type="inferred from homology"/>
<accession>B9MB76</accession>
<protein>
    <recommendedName>
        <fullName evidence="1">Large ribosomal subunit protein uL2</fullName>
    </recommendedName>
    <alternativeName>
        <fullName evidence="3">50S ribosomal protein L2</fullName>
    </alternativeName>
</protein>